<name>YR691_MIMIV</name>
<gene>
    <name type="ordered locus">MIMI_R691</name>
</gene>
<dbReference type="EMBL" id="AY653733">
    <property type="protein sequence ID" value="AAV50952.1"/>
    <property type="molecule type" value="Genomic_DNA"/>
</dbReference>
<dbReference type="SMR" id="Q5UNV1"/>
<dbReference type="KEGG" id="vg:9925342"/>
<dbReference type="OrthoDB" id="16701at10239"/>
<dbReference type="Proteomes" id="UP000001134">
    <property type="component" value="Genome"/>
</dbReference>
<dbReference type="GO" id="GO:0044423">
    <property type="term" value="C:virion component"/>
    <property type="evidence" value="ECO:0007669"/>
    <property type="project" value="UniProtKB-KW"/>
</dbReference>
<feature type="chain" id="PRO_0000071321" description="Uncharacterized protein R691">
    <location>
        <begin position="1"/>
        <end position="275"/>
    </location>
</feature>
<keyword id="KW-1185">Reference proteome</keyword>
<keyword id="KW-0946">Virion</keyword>
<protein>
    <recommendedName>
        <fullName>Uncharacterized protein R691</fullName>
    </recommendedName>
</protein>
<comment type="subcellular location">
    <subcellularLocation>
        <location evidence="1">Virion</location>
    </subcellularLocation>
</comment>
<proteinExistence type="evidence at protein level"/>
<organismHost>
    <name type="scientific">Acanthamoeba polyphaga</name>
    <name type="common">Amoeba</name>
    <dbReference type="NCBI Taxonomy" id="5757"/>
</organismHost>
<accession>Q5UNV1</accession>
<sequence>MSRRKTATKIIDYLEKRINCENIMRYTDEYLDNNSPDKSLVIDEVPVSFTIIPYNANENYSRQLVSTEGDREDKPDFNDIKHMFDVFDFMTEANNTGFEHFPYIYGVLDCLNDIDSTVYVYYEKFDGTLPLLIDNIEHPSDWYDIVFQIVLIIMYIKYVGKMSFKAAPERFLYKKITKPYYKEYSVGDTTLNINHKYLIVCWDTNTTDFEGIQNSESSSENKLPIIDLDFLTEYINVNKDSLKIQPSNRIIKLIQEIKNQPDNIPKILVQYYGPQ</sequence>
<reference key="1">
    <citation type="journal article" date="2004" name="Science">
        <title>The 1.2-megabase genome sequence of Mimivirus.</title>
        <authorList>
            <person name="Raoult D."/>
            <person name="Audic S."/>
            <person name="Robert C."/>
            <person name="Abergel C."/>
            <person name="Renesto P."/>
            <person name="Ogata H."/>
            <person name="La Scola B."/>
            <person name="Susan M."/>
            <person name="Claverie J.-M."/>
        </authorList>
    </citation>
    <scope>NUCLEOTIDE SEQUENCE [LARGE SCALE GENOMIC DNA]</scope>
    <source>
        <strain>Rowbotham-Bradford</strain>
    </source>
</reference>
<reference key="2">
    <citation type="journal article" date="2006" name="J. Virol.">
        <title>Mimivirus giant particles incorporate a large fraction of anonymous and unique gene products.</title>
        <authorList>
            <person name="Renesto P."/>
            <person name="Abergel C."/>
            <person name="Decloquement P."/>
            <person name="Moinier D."/>
            <person name="Azza S."/>
            <person name="Ogata H."/>
            <person name="Fourquet P."/>
            <person name="Gorvel J.-P."/>
            <person name="Claverie J.-M."/>
            <person name="Raoult D."/>
        </authorList>
    </citation>
    <scope>IDENTIFICATION BY MASS SPECTROMETRY [LARGE SCALE ANALYSIS]</scope>
    <scope>SUBCELLULAR LOCATION</scope>
</reference>
<organism>
    <name type="scientific">Acanthamoeba polyphaga mimivirus</name>
    <name type="common">APMV</name>
    <dbReference type="NCBI Taxonomy" id="212035"/>
    <lineage>
        <taxon>Viruses</taxon>
        <taxon>Varidnaviria</taxon>
        <taxon>Bamfordvirae</taxon>
        <taxon>Nucleocytoviricota</taxon>
        <taxon>Megaviricetes</taxon>
        <taxon>Imitervirales</taxon>
        <taxon>Mimiviridae</taxon>
        <taxon>Megamimivirinae</taxon>
        <taxon>Mimivirus</taxon>
        <taxon>Mimivirus bradfordmassiliense</taxon>
    </lineage>
</organism>
<evidence type="ECO:0000269" key="1">
    <source>
    </source>
</evidence>